<reference key="1">
    <citation type="journal article" date="2002" name="Blood Cells Mol. Dis.">
        <title>Identification of the presenilins in hematopoietic cells with localization of presenilin 1 to neutrophil and platelet granules.</title>
        <authorList>
            <person name="Mirinics Z.K."/>
            <person name="Calafat J."/>
            <person name="Udby L."/>
            <person name="Lovelock J."/>
            <person name="Kjeldsen L."/>
            <person name="Rothermund K."/>
            <person name="Sisodia S.S."/>
            <person name="Borregaard N."/>
            <person name="Corey S.J."/>
        </authorList>
    </citation>
    <scope>NUCLEOTIDE SEQUENCE [MRNA]</scope>
    <source>
        <tissue>B-cell</tissue>
    </source>
</reference>
<comment type="function">
    <text evidence="2">Probable catalytic subunit of the gamma-secretase complex, an endoprotease complex that catalyzes the intramembrane cleavage of integral membrane proteins such as Notch receptors and APP (amyloid-beta precursor protein). Requires the other members of the gamma-secretase complex to have a protease activity. May play a role in intracellular signaling and gene expression or in linking chromatin to the nuclear membrane. May function in the cytoplasmic partitioning of proteins. The holoprotein functions as a calcium-leak channel that allows the passive movement of calcium from endoplasmic reticulum to cytosol and is involved in calcium homeostasis. Is a regulator of mitochondrion-endoplasmic reticulum membrane tethering and modulates calcium ions shuttling between ER and mitochondria.</text>
</comment>
<comment type="subunit">
    <text>Homodimer. Component of the gamma-secretase complex, a complex composed of a presenilin homodimer (PSEN1 or PSEN2), nicastrin (NCSTN), APH1 (APH1A or APH1B) and PEN2. Such minimal complex is sufficient for secretase activity, although other components may exist.</text>
</comment>
<comment type="subcellular location">
    <subcellularLocation>
        <location evidence="1">Endoplasmic reticulum membrane</location>
        <topology evidence="1">Multi-pass membrane protein</topology>
    </subcellularLocation>
    <subcellularLocation>
        <location evidence="1">Golgi apparatus membrane</location>
        <topology evidence="1">Multi-pass membrane protein</topology>
    </subcellularLocation>
</comment>
<comment type="domain">
    <text evidence="1">The PAL motif is required for normal active site conformation.</text>
</comment>
<comment type="similarity">
    <text evidence="5">Belongs to the peptidase A22A family.</text>
</comment>
<evidence type="ECO:0000250" key="1"/>
<evidence type="ECO:0000250" key="2">
    <source>
        <dbReference type="UniProtKB" id="P49810"/>
    </source>
</evidence>
<evidence type="ECO:0000255" key="3"/>
<evidence type="ECO:0000256" key="4">
    <source>
        <dbReference type="SAM" id="MobiDB-lite"/>
    </source>
</evidence>
<evidence type="ECO:0000305" key="5"/>
<name>PSN2_CHICK</name>
<sequence>MITFMNNSDSEDEPCNERTSLMSAESPPVPSYQDGLQASETREAQTHRKRQTGSSRSPNNVADEDASDSDVRVRESALENEEEELTLKYGAKHVIMLFVPVTLCMIVVVATIKSVRFYTEKNGQLIYTPFSEDTPSVGQRLLNSVLNTIIMISVIVVMTVFLVVLYKYRCYKFIHGWLILSSFMLLFLFTYIYLGEVLKTYNVAMDYPTVILIIWNFGAVGMIRIHWKGPLQLQQAYLIMISALMVLVFIKYLPEWSAWVILGAISIYDLIAVLCPKGPLRMLXETAQERNQPIFPALIYSSAMIWTVGMAKPDTAAKGQSQQAWDAEDERENHSSTSHSDSQILDTRSPAPSHPITLEEMEEEERGVKLGLGDFIFYSVLVGKAAATPSGDWNTTLAXXVAILIGLCLTLLLLAVFKKALPALPISITFGLIFYFSTDNLVRTDPLEISV</sequence>
<protein>
    <recommendedName>
        <fullName>Presenilin-2</fullName>
        <shortName>PS-2</shortName>
        <ecNumber>3.4.23.-</ecNumber>
    </recommendedName>
    <component>
        <recommendedName>
            <fullName>Presenilin-2 NTF subunit</fullName>
        </recommendedName>
    </component>
    <component>
        <recommendedName>
            <fullName>Presenilin-2 CTF subunit</fullName>
        </recommendedName>
    </component>
</protein>
<organism>
    <name type="scientific">Gallus gallus</name>
    <name type="common">Chicken</name>
    <dbReference type="NCBI Taxonomy" id="9031"/>
    <lineage>
        <taxon>Eukaryota</taxon>
        <taxon>Metazoa</taxon>
        <taxon>Chordata</taxon>
        <taxon>Craniata</taxon>
        <taxon>Vertebrata</taxon>
        <taxon>Euteleostomi</taxon>
        <taxon>Archelosauria</taxon>
        <taxon>Archosauria</taxon>
        <taxon>Dinosauria</taxon>
        <taxon>Saurischia</taxon>
        <taxon>Theropoda</taxon>
        <taxon>Coelurosauria</taxon>
        <taxon>Aves</taxon>
        <taxon>Neognathae</taxon>
        <taxon>Galloanserae</taxon>
        <taxon>Galliformes</taxon>
        <taxon>Phasianidae</taxon>
        <taxon>Phasianinae</taxon>
        <taxon>Gallus</taxon>
    </lineage>
</organism>
<gene>
    <name type="primary">PSEN2</name>
</gene>
<feature type="chain" id="PRO_0000236065" description="Presenilin-2 NTF subunit" evidence="1">
    <location>
        <begin position="1"/>
        <end position="303"/>
    </location>
</feature>
<feature type="chain" id="PRO_0000236066" description="Presenilin-2 CTF subunit" evidence="1">
    <location>
        <begin position="304"/>
        <end position="451"/>
    </location>
</feature>
<feature type="topological domain" description="Cytoplasmic" evidence="3">
    <location>
        <begin position="1"/>
        <end position="93"/>
    </location>
</feature>
<feature type="transmembrane region" description="Helical" evidence="3">
    <location>
        <begin position="94"/>
        <end position="114"/>
    </location>
</feature>
<feature type="topological domain" description="Lumenal" evidence="3">
    <location>
        <begin position="115"/>
        <end position="144"/>
    </location>
</feature>
<feature type="transmembrane region" description="Helical" evidence="3">
    <location>
        <begin position="145"/>
        <end position="165"/>
    </location>
</feature>
<feature type="topological domain" description="Cytoplasmic" evidence="3">
    <location>
        <begin position="166"/>
        <end position="172"/>
    </location>
</feature>
<feature type="transmembrane region" description="Helical" evidence="3">
    <location>
        <begin position="173"/>
        <end position="193"/>
    </location>
</feature>
<feature type="topological domain" description="Lumenal" evidence="3">
    <location>
        <begin position="194"/>
        <end position="202"/>
    </location>
</feature>
<feature type="transmembrane region" description="Helical" evidence="3">
    <location>
        <begin position="203"/>
        <end position="223"/>
    </location>
</feature>
<feature type="topological domain" description="Cytoplasmic" evidence="3">
    <location>
        <begin position="224"/>
        <end position="229"/>
    </location>
</feature>
<feature type="transmembrane region" description="Helical" evidence="3">
    <location>
        <begin position="230"/>
        <end position="250"/>
    </location>
</feature>
<feature type="topological domain" description="Lumenal" evidence="3">
    <location>
        <begin position="251"/>
        <end position="255"/>
    </location>
</feature>
<feature type="transmembrane region" description="Helical" evidence="3">
    <location>
        <begin position="256"/>
        <end position="276"/>
    </location>
</feature>
<feature type="topological domain" description="Cytoplasmic" evidence="3">
    <location>
        <begin position="277"/>
        <end position="366"/>
    </location>
</feature>
<feature type="transmembrane region" description="Helical" evidence="3">
    <location>
        <begin position="367"/>
        <end position="387"/>
    </location>
</feature>
<feature type="topological domain" description="Lumenal" evidence="3">
    <location>
        <begin position="388"/>
        <end position="396"/>
    </location>
</feature>
<feature type="transmembrane region" description="Helical" evidence="3">
    <location>
        <begin position="397"/>
        <end position="417"/>
    </location>
</feature>
<feature type="topological domain" description="Cytoplasmic" evidence="3">
    <location>
        <begin position="418"/>
        <end position="421"/>
    </location>
</feature>
<feature type="intramembrane region" description="Helical" evidence="3">
    <location>
        <begin position="422"/>
        <end position="442"/>
    </location>
</feature>
<feature type="topological domain" description="Cytoplasmic" evidence="3">
    <location>
        <begin position="443"/>
        <end position="451"/>
    </location>
</feature>
<feature type="region of interest" description="Disordered" evidence="4">
    <location>
        <begin position="1"/>
        <end position="77"/>
    </location>
</feature>
<feature type="region of interest" description="Disordered" evidence="4">
    <location>
        <begin position="319"/>
        <end position="354"/>
    </location>
</feature>
<feature type="short sequence motif" description="PAL">
    <location>
        <begin position="422"/>
        <end position="424"/>
    </location>
</feature>
<feature type="compositionally biased region" description="Polar residues" evidence="4">
    <location>
        <begin position="335"/>
        <end position="346"/>
    </location>
</feature>
<feature type="active site" evidence="1">
    <location>
        <position position="269"/>
    </location>
</feature>
<feature type="active site" evidence="1">
    <location>
        <position position="374"/>
    </location>
</feature>
<keyword id="KW-0256">Endoplasmic reticulum</keyword>
<keyword id="KW-0333">Golgi apparatus</keyword>
<keyword id="KW-0378">Hydrolase</keyword>
<keyword id="KW-0472">Membrane</keyword>
<keyword id="KW-0914">Notch signaling pathway</keyword>
<keyword id="KW-0645">Protease</keyword>
<keyword id="KW-1185">Reference proteome</keyword>
<keyword id="KW-0812">Transmembrane</keyword>
<keyword id="KW-1133">Transmembrane helix</keyword>
<proteinExistence type="evidence at transcript level"/>
<dbReference type="EC" id="3.4.23.-"/>
<dbReference type="EMBL" id="AY043493">
    <property type="protein sequence ID" value="AAK95409.1"/>
    <property type="molecule type" value="mRNA"/>
</dbReference>
<dbReference type="FunCoup" id="Q90X07">
    <property type="interactions" value="457"/>
</dbReference>
<dbReference type="STRING" id="9031.ENSGALP00000058473"/>
<dbReference type="MEROPS" id="A22.002"/>
<dbReference type="GlyGen" id="Q90X07">
    <property type="glycosylation" value="1 site"/>
</dbReference>
<dbReference type="PaxDb" id="9031-ENSGALP00000014749"/>
<dbReference type="VEuPathDB" id="HostDB:geneid_374188"/>
<dbReference type="eggNOG" id="KOG2736">
    <property type="taxonomic scope" value="Eukaryota"/>
</dbReference>
<dbReference type="InParanoid" id="Q90X07"/>
<dbReference type="OrthoDB" id="20287at2759"/>
<dbReference type="Proteomes" id="UP000000539">
    <property type="component" value="Unassembled WGS sequence"/>
</dbReference>
<dbReference type="GO" id="GO:0005789">
    <property type="term" value="C:endoplasmic reticulum membrane"/>
    <property type="evidence" value="ECO:0007669"/>
    <property type="project" value="UniProtKB-SubCell"/>
</dbReference>
<dbReference type="GO" id="GO:0070765">
    <property type="term" value="C:gamma-secretase complex"/>
    <property type="evidence" value="ECO:0000318"/>
    <property type="project" value="GO_Central"/>
</dbReference>
<dbReference type="GO" id="GO:0000139">
    <property type="term" value="C:Golgi membrane"/>
    <property type="evidence" value="ECO:0007669"/>
    <property type="project" value="UniProtKB-SubCell"/>
</dbReference>
<dbReference type="GO" id="GO:0042500">
    <property type="term" value="F:aspartic endopeptidase activity, intramembrane cleaving"/>
    <property type="evidence" value="ECO:0000318"/>
    <property type="project" value="GO_Central"/>
</dbReference>
<dbReference type="GO" id="GO:0034205">
    <property type="term" value="P:amyloid-beta formation"/>
    <property type="evidence" value="ECO:0000318"/>
    <property type="project" value="GO_Central"/>
</dbReference>
<dbReference type="GO" id="GO:0055074">
    <property type="term" value="P:calcium ion homeostasis"/>
    <property type="evidence" value="ECO:0000318"/>
    <property type="project" value="GO_Central"/>
</dbReference>
<dbReference type="GO" id="GO:0035556">
    <property type="term" value="P:intracellular signal transduction"/>
    <property type="evidence" value="ECO:0007669"/>
    <property type="project" value="InterPro"/>
</dbReference>
<dbReference type="GO" id="GO:0006509">
    <property type="term" value="P:membrane protein ectodomain proteolysis"/>
    <property type="evidence" value="ECO:0000318"/>
    <property type="project" value="GO_Central"/>
</dbReference>
<dbReference type="GO" id="GO:0007219">
    <property type="term" value="P:Notch signaling pathway"/>
    <property type="evidence" value="ECO:0000318"/>
    <property type="project" value="GO_Central"/>
</dbReference>
<dbReference type="GO" id="GO:0016485">
    <property type="term" value="P:protein processing"/>
    <property type="evidence" value="ECO:0000318"/>
    <property type="project" value="GO_Central"/>
</dbReference>
<dbReference type="FunFam" id="1.10.472.100:FF:000001">
    <property type="entry name" value="Presenilin"/>
    <property type="match status" value="1"/>
</dbReference>
<dbReference type="Gene3D" id="1.10.472.100">
    <property type="entry name" value="Presenilin"/>
    <property type="match status" value="1"/>
</dbReference>
<dbReference type="InterPro" id="IPR001493">
    <property type="entry name" value="Pept_A22A_PS2"/>
</dbReference>
<dbReference type="InterPro" id="IPR001108">
    <property type="entry name" value="Peptidase_A22A"/>
</dbReference>
<dbReference type="InterPro" id="IPR006639">
    <property type="entry name" value="Preselin/SPP"/>
</dbReference>
<dbReference type="InterPro" id="IPR042524">
    <property type="entry name" value="Presenilin_C"/>
</dbReference>
<dbReference type="PANTHER" id="PTHR10202">
    <property type="entry name" value="PRESENILIN"/>
    <property type="match status" value="1"/>
</dbReference>
<dbReference type="PANTHER" id="PTHR10202:SF24">
    <property type="entry name" value="PRESENILIN-2"/>
    <property type="match status" value="1"/>
</dbReference>
<dbReference type="Pfam" id="PF01080">
    <property type="entry name" value="Presenilin"/>
    <property type="match status" value="1"/>
</dbReference>
<dbReference type="PRINTS" id="PR01072">
    <property type="entry name" value="PRESENILIN"/>
</dbReference>
<dbReference type="PRINTS" id="PR01074">
    <property type="entry name" value="PRESENILIN2"/>
</dbReference>
<dbReference type="SMART" id="SM00730">
    <property type="entry name" value="PSN"/>
    <property type="match status" value="1"/>
</dbReference>
<accession>Q90X07</accession>